<accession>Q9BYQ0</accession>
<organism>
    <name type="scientific">Homo sapiens</name>
    <name type="common">Human</name>
    <dbReference type="NCBI Taxonomy" id="9606"/>
    <lineage>
        <taxon>Eukaryota</taxon>
        <taxon>Metazoa</taxon>
        <taxon>Chordata</taxon>
        <taxon>Craniata</taxon>
        <taxon>Vertebrata</taxon>
        <taxon>Euteleostomi</taxon>
        <taxon>Mammalia</taxon>
        <taxon>Eutheria</taxon>
        <taxon>Euarchontoglires</taxon>
        <taxon>Primates</taxon>
        <taxon>Haplorrhini</taxon>
        <taxon>Catarrhini</taxon>
        <taxon>Hominidae</taxon>
        <taxon>Homo</taxon>
    </lineage>
</organism>
<proteinExistence type="evidence at protein level"/>
<reference key="1">
    <citation type="journal article" date="2001" name="J. Biol. Chem.">
        <title>Characterization of a cluster of human high/ultrahigh sulfur keratin-associated protein genes embedded in the type I keratin gene domain on chromosome 17q12-21.</title>
        <authorList>
            <person name="Rogers M.A."/>
            <person name="Langbein L."/>
            <person name="Winter H."/>
            <person name="Ehmann C."/>
            <person name="Praetzel S."/>
            <person name="Korn B."/>
            <person name="Schweizer J."/>
        </authorList>
    </citation>
    <scope>NUCLEOTIDE SEQUENCE [MRNA]</scope>
    <source>
        <tissue>Scalp</tissue>
    </source>
</reference>
<reference key="2">
    <citation type="journal article" date="2006" name="Nature">
        <title>DNA sequence of human chromosome 17 and analysis of rearrangement in the human lineage.</title>
        <authorList>
            <person name="Zody M.C."/>
            <person name="Garber M."/>
            <person name="Adams D.J."/>
            <person name="Sharpe T."/>
            <person name="Harrow J."/>
            <person name="Lupski J.R."/>
            <person name="Nicholson C."/>
            <person name="Searle S.M."/>
            <person name="Wilming L."/>
            <person name="Young S.K."/>
            <person name="Abouelleil A."/>
            <person name="Allen N.R."/>
            <person name="Bi W."/>
            <person name="Bloom T."/>
            <person name="Borowsky M.L."/>
            <person name="Bugalter B.E."/>
            <person name="Butler J."/>
            <person name="Chang J.L."/>
            <person name="Chen C.-K."/>
            <person name="Cook A."/>
            <person name="Corum B."/>
            <person name="Cuomo C.A."/>
            <person name="de Jong P.J."/>
            <person name="DeCaprio D."/>
            <person name="Dewar K."/>
            <person name="FitzGerald M."/>
            <person name="Gilbert J."/>
            <person name="Gibson R."/>
            <person name="Gnerre S."/>
            <person name="Goldstein S."/>
            <person name="Grafham D.V."/>
            <person name="Grocock R."/>
            <person name="Hafez N."/>
            <person name="Hagopian D.S."/>
            <person name="Hart E."/>
            <person name="Norman C.H."/>
            <person name="Humphray S."/>
            <person name="Jaffe D.B."/>
            <person name="Jones M."/>
            <person name="Kamal M."/>
            <person name="Khodiyar V.K."/>
            <person name="LaButti K."/>
            <person name="Laird G."/>
            <person name="Lehoczky J."/>
            <person name="Liu X."/>
            <person name="Lokyitsang T."/>
            <person name="Loveland J."/>
            <person name="Lui A."/>
            <person name="Macdonald P."/>
            <person name="Major J.E."/>
            <person name="Matthews L."/>
            <person name="Mauceli E."/>
            <person name="McCarroll S.A."/>
            <person name="Mihalev A.H."/>
            <person name="Mudge J."/>
            <person name="Nguyen C."/>
            <person name="Nicol R."/>
            <person name="O'Leary S.B."/>
            <person name="Osoegawa K."/>
            <person name="Schwartz D.C."/>
            <person name="Shaw-Smith C."/>
            <person name="Stankiewicz P."/>
            <person name="Steward C."/>
            <person name="Swarbreck D."/>
            <person name="Venkataraman V."/>
            <person name="Whittaker C.A."/>
            <person name="Yang X."/>
            <person name="Zimmer A.R."/>
            <person name="Bradley A."/>
            <person name="Hubbard T."/>
            <person name="Birren B.W."/>
            <person name="Rogers J."/>
            <person name="Lander E.S."/>
            <person name="Nusbaum C."/>
        </authorList>
    </citation>
    <scope>NUCLEOTIDE SEQUENCE [LARGE SCALE GENOMIC DNA]</scope>
</reference>
<reference key="3">
    <citation type="journal article" date="2004" name="Genome Res.">
        <title>The status, quality, and expansion of the NIH full-length cDNA project: the Mammalian Gene Collection (MGC).</title>
        <authorList>
            <consortium name="The MGC Project Team"/>
        </authorList>
    </citation>
    <scope>NUCLEOTIDE SEQUENCE [LARGE SCALE MRNA]</scope>
</reference>
<protein>
    <recommendedName>
        <fullName>Keratin-associated protein 9-8</fullName>
    </recommendedName>
    <alternativeName>
        <fullName>Keratin-associated protein 9.8</fullName>
    </alternativeName>
    <alternativeName>
        <fullName>Ultrahigh sulfur keratin-associated protein 9.8</fullName>
    </alternativeName>
</protein>
<dbReference type="EMBL" id="AJ406950">
    <property type="protein sequence ID" value="CAC27589.1"/>
    <property type="molecule type" value="mRNA"/>
</dbReference>
<dbReference type="EMBL" id="AC006070">
    <property type="status" value="NOT_ANNOTATED_CDS"/>
    <property type="molecule type" value="Genomic_DNA"/>
</dbReference>
<dbReference type="EMBL" id="BC074981">
    <property type="protein sequence ID" value="AAH74981.1"/>
    <property type="molecule type" value="mRNA"/>
</dbReference>
<dbReference type="EMBL" id="BC074982">
    <property type="protein sequence ID" value="AAH74982.1"/>
    <property type="molecule type" value="mRNA"/>
</dbReference>
<dbReference type="CCDS" id="CCDS42334.1"/>
<dbReference type="RefSeq" id="NP_114169.2">
    <property type="nucleotide sequence ID" value="NM_031963.2"/>
</dbReference>
<dbReference type="RefSeq" id="XP_016855212.1">
    <property type="nucleotide sequence ID" value="XM_016999723.1"/>
</dbReference>
<dbReference type="BioGRID" id="123812">
    <property type="interactions" value="100"/>
</dbReference>
<dbReference type="FunCoup" id="Q9BYQ0">
    <property type="interactions" value="41"/>
</dbReference>
<dbReference type="IntAct" id="Q9BYQ0">
    <property type="interactions" value="82"/>
</dbReference>
<dbReference type="STRING" id="9606.ENSP00000254072"/>
<dbReference type="iPTMnet" id="Q9BYQ0"/>
<dbReference type="PhosphoSitePlus" id="Q9BYQ0"/>
<dbReference type="BioMuta" id="KRTAP9-8"/>
<dbReference type="DMDM" id="296434559"/>
<dbReference type="MassIVE" id="Q9BYQ0"/>
<dbReference type="PaxDb" id="9606-ENSP00000254072"/>
<dbReference type="PeptideAtlas" id="Q9BYQ0"/>
<dbReference type="Antibodypedia" id="76595">
    <property type="antibodies" value="2 antibodies from 2 providers"/>
</dbReference>
<dbReference type="DNASU" id="83901"/>
<dbReference type="Ensembl" id="ENST00000254072.7">
    <property type="protein sequence ID" value="ENSP00000254072.6"/>
    <property type="gene ID" value="ENSG00000187272.7"/>
</dbReference>
<dbReference type="GeneID" id="83901"/>
<dbReference type="KEGG" id="hsa:83901"/>
<dbReference type="MANE-Select" id="ENST00000254072.7">
    <property type="protein sequence ID" value="ENSP00000254072.6"/>
    <property type="RefSeq nucleotide sequence ID" value="NM_031963.3"/>
    <property type="RefSeq protein sequence ID" value="NP_114169.2"/>
</dbReference>
<dbReference type="UCSC" id="uc002hwh.5">
    <property type="organism name" value="human"/>
</dbReference>
<dbReference type="AGR" id="HGNC:17231"/>
<dbReference type="CTD" id="83901"/>
<dbReference type="GeneCards" id="KRTAP9-8"/>
<dbReference type="HGNC" id="HGNC:17231">
    <property type="gene designation" value="KRTAP9-8"/>
</dbReference>
<dbReference type="HPA" id="ENSG00000187272">
    <property type="expression patterns" value="Tissue enriched (skin)"/>
</dbReference>
<dbReference type="neXtProt" id="NX_Q9BYQ0"/>
<dbReference type="PharmGKB" id="PA38443"/>
<dbReference type="VEuPathDB" id="HostDB:ENSG00000187272"/>
<dbReference type="eggNOG" id="KOG4726">
    <property type="taxonomic scope" value="Eukaryota"/>
</dbReference>
<dbReference type="GeneTree" id="ENSGT00940000156135"/>
<dbReference type="InParanoid" id="Q9BYQ0"/>
<dbReference type="OMA" id="NTSCRNT"/>
<dbReference type="PAN-GO" id="Q9BYQ0">
    <property type="GO annotations" value="0 GO annotations based on evolutionary models"/>
</dbReference>
<dbReference type="PhylomeDB" id="Q9BYQ0"/>
<dbReference type="TreeFam" id="TF351356"/>
<dbReference type="PathwayCommons" id="Q9BYQ0"/>
<dbReference type="Reactome" id="R-HSA-6805567">
    <property type="pathway name" value="Keratinization"/>
</dbReference>
<dbReference type="SignaLink" id="Q9BYQ0"/>
<dbReference type="BioGRID-ORCS" id="83901">
    <property type="hits" value="24 hits in 1040 CRISPR screens"/>
</dbReference>
<dbReference type="GenomeRNAi" id="83901"/>
<dbReference type="Pharos" id="Q9BYQ0">
    <property type="development level" value="Tdark"/>
</dbReference>
<dbReference type="PRO" id="PR:Q9BYQ0"/>
<dbReference type="Proteomes" id="UP000005640">
    <property type="component" value="Chromosome 17"/>
</dbReference>
<dbReference type="RNAct" id="Q9BYQ0">
    <property type="molecule type" value="protein"/>
</dbReference>
<dbReference type="Bgee" id="ENSG00000187272">
    <property type="expression patterns" value="Expressed in skin of abdomen and 25 other cell types or tissues"/>
</dbReference>
<dbReference type="GO" id="GO:0005829">
    <property type="term" value="C:cytosol"/>
    <property type="evidence" value="ECO:0000304"/>
    <property type="project" value="Reactome"/>
</dbReference>
<dbReference type="GO" id="GO:0045095">
    <property type="term" value="C:keratin filament"/>
    <property type="evidence" value="ECO:0007669"/>
    <property type="project" value="InterPro"/>
</dbReference>
<dbReference type="InterPro" id="IPR002494">
    <property type="entry name" value="KAP"/>
</dbReference>
<dbReference type="Pfam" id="PF13885">
    <property type="entry name" value="Keratin_B2_2"/>
    <property type="match status" value="2"/>
</dbReference>
<evidence type="ECO:0000305" key="1"/>
<gene>
    <name type="primary">KRTAP9-8</name>
    <name type="synonym">KAP9.8</name>
    <name type="synonym">KRTAP9.8</name>
</gene>
<feature type="chain" id="PRO_0000185192" description="Keratin-associated protein 9-8">
    <location>
        <begin position="1"/>
        <end position="159"/>
    </location>
</feature>
<feature type="repeat" description="1">
    <location>
        <begin position="8"/>
        <end position="12"/>
    </location>
</feature>
<feature type="repeat" description="2">
    <location>
        <begin position="13"/>
        <end position="17"/>
    </location>
</feature>
<feature type="repeat" description="3">
    <location>
        <begin position="32"/>
        <end position="36"/>
    </location>
</feature>
<feature type="repeat" description="4">
    <location>
        <begin position="37"/>
        <end position="41"/>
    </location>
</feature>
<feature type="repeat" description="5">
    <location>
        <begin position="46"/>
        <end position="50"/>
    </location>
</feature>
<feature type="repeat" description="6">
    <location>
        <begin position="51"/>
        <end position="55"/>
    </location>
</feature>
<feature type="repeat" description="7">
    <location>
        <begin position="56"/>
        <end position="60"/>
    </location>
</feature>
<feature type="repeat" description="8">
    <location>
        <begin position="65"/>
        <end position="69"/>
    </location>
</feature>
<feature type="repeat" description="9">
    <location>
        <begin position="70"/>
        <end position="74"/>
    </location>
</feature>
<feature type="repeat" description="10">
    <location>
        <begin position="75"/>
        <end position="79"/>
    </location>
</feature>
<feature type="repeat" description="11">
    <location>
        <begin position="80"/>
        <end position="84"/>
    </location>
</feature>
<feature type="repeat" description="12">
    <location>
        <begin position="129"/>
        <end position="133"/>
    </location>
</feature>
<feature type="repeat" description="13">
    <location>
        <begin position="134"/>
        <end position="138"/>
    </location>
</feature>
<feature type="repeat" description="14">
    <location>
        <begin position="139"/>
        <end position="142"/>
    </location>
</feature>
<feature type="repeat" description="15">
    <location>
        <begin position="153"/>
        <end position="157"/>
    </location>
</feature>
<feature type="region of interest" description="15 X 5 AA repeats of C-C-[RQVSGE]-[SPSNQ]-[TASPI]">
    <location>
        <begin position="8"/>
        <end position="157"/>
    </location>
</feature>
<feature type="sequence conflict" description="In Ref. 1; CAC27589 and 3; AAH74981/AAH74982." evidence="1" ref="1 3">
    <original>N</original>
    <variation>S</variation>
    <location>
        <position position="124"/>
    </location>
</feature>
<feature type="sequence conflict" description="In Ref. 1; CAC27589 and 3; AAH74981/AAH74982." evidence="1" ref="1 3">
    <original>S</original>
    <variation>Y</variation>
    <location>
        <position position="151"/>
    </location>
</feature>
<comment type="function">
    <text>In the hair cortex, hair keratin intermediate filaments are embedded in an interfilamentous matrix, consisting of hair keratin-associated proteins (KRTAP), which are essential for the formation of a rigid and resistant hair shaft through their extensive disulfide bond cross-linking with abundant cysteine residues of hair keratins. The matrix proteins include the high-sulfur and high-glycine-tyrosine keratins.</text>
</comment>
<comment type="subunit">
    <text>Interacts with hair keratins.</text>
</comment>
<comment type="interaction">
    <interactant intactId="EBI-11958364">
        <id>Q9BYQ0</id>
    </interactant>
    <interactant intactId="EBI-12006944">
        <id>O43184-4</id>
        <label>ADAM12</label>
    </interactant>
    <organismsDiffer>false</organismsDiffer>
    <experiments>3</experiments>
</comment>
<comment type="interaction">
    <interactant intactId="EBI-11958364">
        <id>Q9BYQ0</id>
    </interactant>
    <interactant intactId="EBI-745213">
        <id>P29972</id>
        <label>AQP1</label>
    </interactant>
    <organismsDiffer>false</organismsDiffer>
    <experiments>3</experiments>
</comment>
<comment type="interaction">
    <interactant intactId="EBI-11958364">
        <id>Q9BYQ0</id>
    </interactant>
    <interactant intactId="EBI-1035195">
        <id>P18075</id>
        <label>BMP7</label>
    </interactant>
    <organismsDiffer>false</organismsDiffer>
    <experiments>3</experiments>
</comment>
<comment type="interaction">
    <interactant intactId="EBI-11958364">
        <id>Q9BYQ0</id>
    </interactant>
    <interactant intactId="EBI-744545">
        <id>Q8NEC5</id>
        <label>CATSPER1</label>
    </interactant>
    <organismsDiffer>false</organismsDiffer>
    <experiments>3</experiments>
</comment>
<comment type="interaction">
    <interactant intactId="EBI-11958364">
        <id>Q9BYQ0</id>
    </interactant>
    <interactant intactId="EBI-12139335">
        <id>Q8N6W0</id>
        <label>CELF5</label>
    </interactant>
    <organismsDiffer>false</organismsDiffer>
    <experiments>3</experiments>
</comment>
<comment type="interaction">
    <interactant intactId="EBI-11958364">
        <id>Q9BYQ0</id>
    </interactant>
    <interactant intactId="EBI-741032">
        <id>Q8NE01</id>
        <label>CNNM3</label>
    </interactant>
    <organismsDiffer>false</organismsDiffer>
    <experiments>3</experiments>
</comment>
<comment type="interaction">
    <interactant intactId="EBI-11958364">
        <id>Q9BYQ0</id>
    </interactant>
    <interactant intactId="EBI-10192698">
        <id>Q02930-3</id>
        <label>CREB5</label>
    </interactant>
    <organismsDiffer>false</organismsDiffer>
    <experiments>5</experiments>
</comment>
<comment type="interaction">
    <interactant intactId="EBI-11958364">
        <id>Q9BYQ0</id>
    </interactant>
    <interactant intactId="EBI-2212355">
        <id>Q49AN0</id>
        <label>CRY2</label>
    </interactant>
    <organismsDiffer>false</organismsDiffer>
    <experiments>3</experiments>
</comment>
<comment type="interaction">
    <interactant intactId="EBI-11958364">
        <id>Q9BYQ0</id>
    </interactant>
    <interactant intactId="EBI-3867333">
        <id>A8MQ03</id>
        <label>CYSRT1</label>
    </interactant>
    <organismsDiffer>false</organismsDiffer>
    <experiments>7</experiments>
</comment>
<comment type="interaction">
    <interactant intactId="EBI-11958364">
        <id>Q9BYQ0</id>
    </interactant>
    <interactant intactId="EBI-746300">
        <id>Q96LJ7</id>
        <label>DHRS1</label>
    </interactant>
    <organismsDiffer>false</organismsDiffer>
    <experiments>3</experiments>
</comment>
<comment type="interaction">
    <interactant intactId="EBI-11958364">
        <id>Q9BYQ0</id>
    </interactant>
    <interactant intactId="EBI-742362">
        <id>O96015</id>
        <label>DNAL4</label>
    </interactant>
    <organismsDiffer>false</organismsDiffer>
    <experiments>3</experiments>
</comment>
<comment type="interaction">
    <interactant intactId="EBI-11958364">
        <id>Q9BYQ0</id>
    </interactant>
    <interactant intactId="EBI-719816">
        <id>Q9NWN3</id>
        <label>FBXO34</label>
    </interactant>
    <organismsDiffer>false</organismsDiffer>
    <experiments>3</experiments>
</comment>
<comment type="interaction">
    <interactant intactId="EBI-11958364">
        <id>Q9BYQ0</id>
    </interactant>
    <interactant intactId="EBI-374781">
        <id>O76003</id>
        <label>GLRX3</label>
    </interactant>
    <organismsDiffer>false</organismsDiffer>
    <experiments>3</experiments>
</comment>
<comment type="interaction">
    <interactant intactId="EBI-11958364">
        <id>Q9BYQ0</id>
    </interactant>
    <interactant intactId="EBI-11975289">
        <id>Q9Y223-2</id>
        <label>GNE</label>
    </interactant>
    <organismsDiffer>false</organismsDiffer>
    <experiments>3</experiments>
</comment>
<comment type="interaction">
    <interactant intactId="EBI-11958364">
        <id>Q9BYQ0</id>
    </interactant>
    <interactant intactId="EBI-11978177">
        <id>Q96NT3-2</id>
        <label>GUCD1</label>
    </interactant>
    <organismsDiffer>false</organismsDiffer>
    <experiments>3</experiments>
</comment>
<comment type="interaction">
    <interactant intactId="EBI-11958364">
        <id>Q9BYQ0</id>
    </interactant>
    <interactant intactId="EBI-740785">
        <id>P49639</id>
        <label>HOXA1</label>
    </interactant>
    <organismsDiffer>false</organismsDiffer>
    <experiments>8</experiments>
</comment>
<comment type="interaction">
    <interactant intactId="EBI-11958364">
        <id>Q9BYQ0</id>
    </interactant>
    <interactant intactId="EBI-6426443">
        <id>Q2WGJ6</id>
        <label>KLHL38</label>
    </interactant>
    <organismsDiffer>false</organismsDiffer>
    <experiments>5</experiments>
</comment>
<comment type="interaction">
    <interactant intactId="EBI-11958364">
        <id>Q9BYQ0</id>
    </interactant>
    <interactant intactId="EBI-11959885">
        <id>Q07627</id>
        <label>KRTAP1-1</label>
    </interactant>
    <organismsDiffer>false</organismsDiffer>
    <experiments>3</experiments>
</comment>
<comment type="interaction">
    <interactant intactId="EBI-11958364">
        <id>Q9BYQ0</id>
    </interactant>
    <interactant intactId="EBI-11749135">
        <id>Q8IUG1</id>
        <label>KRTAP1-3</label>
    </interactant>
    <organismsDiffer>false</organismsDiffer>
    <experiments>3</experiments>
</comment>
<comment type="interaction">
    <interactant intactId="EBI-11958364">
        <id>Q9BYQ0</id>
    </interactant>
    <interactant intactId="EBI-10172150">
        <id>P60370</id>
        <label>KRTAP10-5</label>
    </interactant>
    <organismsDiffer>false</organismsDiffer>
    <experiments>3</experiments>
</comment>
<comment type="interaction">
    <interactant intactId="EBI-11958364">
        <id>Q9BYQ0</id>
    </interactant>
    <interactant intactId="EBI-10172290">
        <id>P60409</id>
        <label>KRTAP10-7</label>
    </interactant>
    <organismsDiffer>false</organismsDiffer>
    <experiments>3</experiments>
</comment>
<comment type="interaction">
    <interactant intactId="EBI-11958364">
        <id>Q9BYQ0</id>
    </interactant>
    <interactant intactId="EBI-10171774">
        <id>P60410</id>
        <label>KRTAP10-8</label>
    </interactant>
    <organismsDiffer>false</organismsDiffer>
    <experiments>5</experiments>
</comment>
<comment type="interaction">
    <interactant intactId="EBI-11958364">
        <id>Q9BYQ0</id>
    </interactant>
    <interactant intactId="EBI-1052037">
        <id>Q8IUC1</id>
        <label>KRTAP11-1</label>
    </interactant>
    <organismsDiffer>false</organismsDiffer>
    <experiments>3</experiments>
</comment>
<comment type="interaction">
    <interactant intactId="EBI-11958364">
        <id>Q9BYQ0</id>
    </interactant>
    <interactant intactId="EBI-10176379">
        <id>P59991</id>
        <label>KRTAP12-2</label>
    </interactant>
    <organismsDiffer>false</organismsDiffer>
    <experiments>3</experiments>
</comment>
<comment type="interaction">
    <interactant intactId="EBI-11958364">
        <id>Q9BYQ0</id>
    </interactant>
    <interactant intactId="EBI-11988175">
        <id>Q9BYP8</id>
        <label>KRTAP17-1</label>
    </interactant>
    <organismsDiffer>false</organismsDiffer>
    <experiments>3</experiments>
</comment>
<comment type="interaction">
    <interactant intactId="EBI-11958364">
        <id>Q9BYQ0</id>
    </interactant>
    <interactant intactId="EBI-14065470">
        <id>Q9BYR9</id>
        <label>KRTAP2-4</label>
    </interactant>
    <organismsDiffer>false</organismsDiffer>
    <experiments>3</experiments>
</comment>
<comment type="interaction">
    <interactant intactId="EBI-11958364">
        <id>Q9BYQ0</id>
    </interactant>
    <interactant intactId="EBI-3957672">
        <id>Q6PEX3</id>
        <label>KRTAP26-1</label>
    </interactant>
    <organismsDiffer>false</organismsDiffer>
    <experiments>3</experiments>
</comment>
<comment type="interaction">
    <interactant intactId="EBI-11958364">
        <id>Q9BYQ0</id>
    </interactant>
    <interactant intactId="EBI-9996449">
        <id>Q9BYR8</id>
        <label>KRTAP3-1</label>
    </interactant>
    <organismsDiffer>false</organismsDiffer>
    <experiments>3</experiments>
</comment>
<comment type="interaction">
    <interactant intactId="EBI-11958364">
        <id>Q9BYQ0</id>
    </interactant>
    <interactant intactId="EBI-3957694">
        <id>Q9BYR6</id>
        <label>KRTAP3-3</label>
    </interactant>
    <organismsDiffer>false</organismsDiffer>
    <experiments>3</experiments>
</comment>
<comment type="interaction">
    <interactant intactId="EBI-11958364">
        <id>Q9BYQ0</id>
    </interactant>
    <interactant intactId="EBI-34579671">
        <id>Q9BYQ7</id>
        <label>KRTAP4-1</label>
    </interactant>
    <organismsDiffer>false</organismsDiffer>
    <experiments>3</experiments>
</comment>
<comment type="interaction">
    <interactant intactId="EBI-11958364">
        <id>Q9BYQ0</id>
    </interactant>
    <interactant intactId="EBI-10302392">
        <id>Q9BYQ6</id>
        <label>KRTAP4-11</label>
    </interactant>
    <organismsDiffer>false</organismsDiffer>
    <experiments>3</experiments>
</comment>
<comment type="interaction">
    <interactant intactId="EBI-11958364">
        <id>Q9BYQ0</id>
    </interactant>
    <interactant intactId="EBI-10172511">
        <id>Q9BYR5</id>
        <label>KRTAP4-2</label>
    </interactant>
    <organismsDiffer>false</organismsDiffer>
    <experiments>3</experiments>
</comment>
<comment type="interaction">
    <interactant intactId="EBI-11958364">
        <id>Q9BYQ0</id>
    </interactant>
    <interactant intactId="EBI-11958132">
        <id>Q9BYR3</id>
        <label>KRTAP4-4</label>
    </interactant>
    <organismsDiffer>false</organismsDiffer>
    <experiments>3</experiments>
</comment>
<comment type="interaction">
    <interactant intactId="EBI-11958364">
        <id>Q9BYQ0</id>
    </interactant>
    <interactant intactId="EBI-11993296">
        <id>Q6L8G4</id>
        <label>KRTAP5-11</label>
    </interactant>
    <organismsDiffer>false</organismsDiffer>
    <experiments>6</experiments>
</comment>
<comment type="interaction">
    <interactant intactId="EBI-11958364">
        <id>Q9BYQ0</id>
    </interactant>
    <interactant intactId="EBI-10250562">
        <id>Q6L8G9</id>
        <label>KRTAP5-6</label>
    </interactant>
    <organismsDiffer>false</organismsDiffer>
    <experiments>4</experiments>
</comment>
<comment type="interaction">
    <interactant intactId="EBI-11958364">
        <id>Q9BYQ0</id>
    </interactant>
    <interactant intactId="EBI-3958099">
        <id>P26371</id>
        <label>KRTAP5-9</label>
    </interactant>
    <organismsDiffer>false</organismsDiffer>
    <experiments>6</experiments>
</comment>
<comment type="interaction">
    <interactant intactId="EBI-11958364">
        <id>Q9BYQ0</id>
    </interactant>
    <interactant intactId="EBI-1044640">
        <id>Q9BYQ4</id>
        <label>KRTAP9-2</label>
    </interactant>
    <organismsDiffer>false</organismsDiffer>
    <experiments>3</experiments>
</comment>
<comment type="interaction">
    <interactant intactId="EBI-11958364">
        <id>Q9BYQ0</id>
    </interactant>
    <interactant intactId="EBI-1043191">
        <id>Q9BYQ3</id>
        <label>KRTAP9-3</label>
    </interactant>
    <organismsDiffer>false</organismsDiffer>
    <experiments>6</experiments>
</comment>
<comment type="interaction">
    <interactant intactId="EBI-11958364">
        <id>Q9BYQ0</id>
    </interactant>
    <interactant intactId="EBI-11962058">
        <id>Q5T7P2</id>
        <label>LCE1A</label>
    </interactant>
    <organismsDiffer>false</organismsDiffer>
    <experiments>6</experiments>
</comment>
<comment type="interaction">
    <interactant intactId="EBI-11958364">
        <id>Q9BYQ0</id>
    </interactant>
    <interactant intactId="EBI-10245913">
        <id>Q5T7P3</id>
        <label>LCE1B</label>
    </interactant>
    <organismsDiffer>false</organismsDiffer>
    <experiments>5</experiments>
</comment>
<comment type="interaction">
    <interactant intactId="EBI-11958364">
        <id>Q9BYQ0</id>
    </interactant>
    <interactant intactId="EBI-12224199">
        <id>Q5T751</id>
        <label>LCE1C</label>
    </interactant>
    <organismsDiffer>false</organismsDiffer>
    <experiments>3</experiments>
</comment>
<comment type="interaction">
    <interactant intactId="EBI-11958364">
        <id>Q9BYQ0</id>
    </interactant>
    <interactant intactId="EBI-11741311">
        <id>Q5T752</id>
        <label>LCE1D</label>
    </interactant>
    <organismsDiffer>false</organismsDiffer>
    <experiments>3</experiments>
</comment>
<comment type="interaction">
    <interactant intactId="EBI-11958364">
        <id>Q9BYQ0</id>
    </interactant>
    <interactant intactId="EBI-11955335">
        <id>Q5T753</id>
        <label>LCE1E</label>
    </interactant>
    <organismsDiffer>false</organismsDiffer>
    <experiments>3</experiments>
</comment>
<comment type="interaction">
    <interactant intactId="EBI-11958364">
        <id>Q9BYQ0</id>
    </interactant>
    <interactant intactId="EBI-11958008">
        <id>Q5T754</id>
        <label>LCE1F</label>
    </interactant>
    <organismsDiffer>false</organismsDiffer>
    <experiments>6</experiments>
</comment>
<comment type="interaction">
    <interactant intactId="EBI-11958364">
        <id>Q9BYQ0</id>
    </interactant>
    <interactant intactId="EBI-10246607">
        <id>Q5TA79</id>
        <label>LCE2A</label>
    </interactant>
    <organismsDiffer>false</organismsDiffer>
    <experiments>3</experiments>
</comment>
<comment type="interaction">
    <interactant intactId="EBI-11958364">
        <id>Q9BYQ0</id>
    </interactant>
    <interactant intactId="EBI-11478468">
        <id>O14633</id>
        <label>LCE2B</label>
    </interactant>
    <organismsDiffer>false</organismsDiffer>
    <experiments>6</experiments>
</comment>
<comment type="interaction">
    <interactant intactId="EBI-11958364">
        <id>Q9BYQ0</id>
    </interactant>
    <interactant intactId="EBI-11973993">
        <id>Q5TA81</id>
        <label>LCE2C</label>
    </interactant>
    <organismsDiffer>false</organismsDiffer>
    <experiments>3</experiments>
</comment>
<comment type="interaction">
    <interactant intactId="EBI-11958364">
        <id>Q9BYQ0</id>
    </interactant>
    <interactant intactId="EBI-10246750">
        <id>Q5TA82</id>
        <label>LCE2D</label>
    </interactant>
    <organismsDiffer>false</organismsDiffer>
    <experiments>3</experiments>
</comment>
<comment type="interaction">
    <interactant intactId="EBI-11958364">
        <id>Q9BYQ0</id>
    </interactant>
    <interactant intactId="EBI-9394625">
        <id>Q5TA76</id>
        <label>LCE3A</label>
    </interactant>
    <organismsDiffer>false</organismsDiffer>
    <experiments>5</experiments>
</comment>
<comment type="interaction">
    <interactant intactId="EBI-11958364">
        <id>Q9BYQ0</id>
    </interactant>
    <interactant intactId="EBI-11974495">
        <id>Q5TA77</id>
        <label>LCE3B</label>
    </interactant>
    <organismsDiffer>false</organismsDiffer>
    <experiments>3</experiments>
</comment>
<comment type="interaction">
    <interactant intactId="EBI-11958364">
        <id>Q9BYQ0</id>
    </interactant>
    <interactant intactId="EBI-6658837">
        <id>Q9BYE3</id>
        <label>LCE3D</label>
    </interactant>
    <organismsDiffer>false</organismsDiffer>
    <experiments>3</experiments>
</comment>
<comment type="interaction">
    <interactant intactId="EBI-11958364">
        <id>Q9BYQ0</id>
    </interactant>
    <interactant intactId="EBI-10245456">
        <id>Q5T5B0</id>
        <label>LCE3E</label>
    </interactant>
    <organismsDiffer>false</organismsDiffer>
    <experiments>5</experiments>
</comment>
<comment type="interaction">
    <interactant intactId="EBI-11958364">
        <id>Q9BYQ0</id>
    </interactant>
    <interactant intactId="EBI-10246358">
        <id>Q5TA78</id>
        <label>LCE4A</label>
    </interactant>
    <organismsDiffer>false</organismsDiffer>
    <experiments>3</experiments>
</comment>
<comment type="interaction">
    <interactant intactId="EBI-11958364">
        <id>Q9BYQ0</id>
    </interactant>
    <interactant intactId="EBI-739832">
        <id>Q8TBB1</id>
        <label>LNX1</label>
    </interactant>
    <organismsDiffer>false</organismsDiffer>
    <experiments>3</experiments>
</comment>
<comment type="interaction">
    <interactant intactId="EBI-11958364">
        <id>Q9BYQ0</id>
    </interactant>
    <interactant intactId="EBI-16439278">
        <id>Q6FHY5</id>
        <label>MEOX2</label>
    </interactant>
    <organismsDiffer>false</organismsDiffer>
    <experiments>3</experiments>
</comment>
<comment type="interaction">
    <interactant intactId="EBI-11958364">
        <id>Q9BYQ0</id>
    </interactant>
    <interactant intactId="EBI-1538217">
        <id>Q969G9</id>
        <label>NKD1</label>
    </interactant>
    <organismsDiffer>false</organismsDiffer>
    <experiments>3</experiments>
</comment>
<comment type="interaction">
    <interactant intactId="EBI-11958364">
        <id>Q9BYQ0</id>
    </interactant>
    <interactant intactId="EBI-22310682">
        <id>P0DPK4</id>
        <label>NOTCH2NLC</label>
    </interactant>
    <organismsDiffer>false</organismsDiffer>
    <experiments>3</experiments>
</comment>
<comment type="interaction">
    <interactant intactId="EBI-11958364">
        <id>Q9BYQ0</id>
    </interactant>
    <interactant intactId="EBI-10250949">
        <id>Q6NSM0</id>
        <label>NR1D2</label>
    </interactant>
    <organismsDiffer>false</organismsDiffer>
    <experiments>3</experiments>
</comment>
<comment type="interaction">
    <interactant intactId="EBI-11958364">
        <id>Q9BYQ0</id>
    </interactant>
    <interactant intactId="EBI-13644623">
        <id>Q92570</id>
        <label>NR4A3</label>
    </interactant>
    <organismsDiffer>false</organismsDiffer>
    <experiments>3</experiments>
</comment>
<comment type="interaction">
    <interactant intactId="EBI-11958364">
        <id>Q9BYQ0</id>
    </interactant>
    <interactant intactId="EBI-741158">
        <id>Q96HA8</id>
        <label>NTAQ1</label>
    </interactant>
    <organismsDiffer>false</organismsDiffer>
    <experiments>3</experiments>
</comment>
<comment type="interaction">
    <interactant intactId="EBI-11958364">
        <id>Q9BYQ0</id>
    </interactant>
    <interactant intactId="EBI-1048886">
        <id>Q9Y5Y2</id>
        <label>NUBP2</label>
    </interactant>
    <organismsDiffer>false</organismsDiffer>
    <experiments>3</experiments>
</comment>
<comment type="interaction">
    <interactant intactId="EBI-11958364">
        <id>Q9BYQ0</id>
    </interactant>
    <interactant intactId="EBI-1210753">
        <id>Q7Z417</id>
        <label>NUFIP2</label>
    </interactant>
    <organismsDiffer>false</organismsDiffer>
    <experiments>3</experiments>
</comment>
<comment type="interaction">
    <interactant intactId="EBI-11958364">
        <id>Q9BYQ0</id>
    </interactant>
    <interactant intactId="EBI-591778">
        <id>P61970</id>
        <label>NUTF2</label>
    </interactant>
    <organismsDiffer>false</organismsDiffer>
    <experiments>3</experiments>
</comment>
<comment type="interaction">
    <interactant intactId="EBI-11958364">
        <id>Q9BYQ0</id>
    </interactant>
    <interactant intactId="EBI-10225049">
        <id>Q7RTU3</id>
        <label>OLIG3</label>
    </interactant>
    <organismsDiffer>false</organismsDiffer>
    <experiments>3</experiments>
</comment>
<comment type="interaction">
    <interactant intactId="EBI-11958364">
        <id>Q9BYQ0</id>
    </interactant>
    <interactant intactId="EBI-740446">
        <id>P32242</id>
        <label>OTX1</label>
    </interactant>
    <organismsDiffer>false</organismsDiffer>
    <experiments>3</experiments>
</comment>
<comment type="interaction">
    <interactant intactId="EBI-11958364">
        <id>Q9BYQ0</id>
    </interactant>
    <interactant intactId="EBI-395883">
        <id>P07237</id>
        <label>P4HB</label>
    </interactant>
    <organismsDiffer>false</organismsDiffer>
    <experiments>3</experiments>
</comment>
<comment type="interaction">
    <interactant intactId="EBI-11958364">
        <id>Q9BYQ0</id>
    </interactant>
    <interactant intactId="EBI-747278">
        <id>P26367</id>
        <label>PAX6</label>
    </interactant>
    <organismsDiffer>false</organismsDiffer>
    <experiments>3</experiments>
</comment>
<comment type="interaction">
    <interactant intactId="EBI-11958364">
        <id>Q9BYQ0</id>
    </interactant>
    <interactant intactId="EBI-14084211">
        <id>A2BDE7</id>
        <label>PHLDA1</label>
    </interactant>
    <organismsDiffer>false</organismsDiffer>
    <experiments>5</experiments>
</comment>
<comment type="interaction">
    <interactant intactId="EBI-11958364">
        <id>Q9BYQ0</id>
    </interactant>
    <interactant intactId="EBI-17236143">
        <id>Q12837</id>
        <label>POU4F2</label>
    </interactant>
    <organismsDiffer>false</organismsDiffer>
    <experiments>3</experiments>
</comment>
<comment type="interaction">
    <interactant intactId="EBI-11958364">
        <id>Q9BYQ0</id>
    </interactant>
    <interactant intactId="EBI-1053424">
        <id>O43741</id>
        <label>PRKAB2</label>
    </interactant>
    <organismsDiffer>false</organismsDiffer>
    <experiments>8</experiments>
</comment>
<comment type="interaction">
    <interactant intactId="EBI-11958364">
        <id>Q9BYQ0</id>
    </interactant>
    <interactant intactId="EBI-1181439">
        <id>P54619</id>
        <label>PRKAG1</label>
    </interactant>
    <organismsDiffer>false</organismsDiffer>
    <experiments>3</experiments>
</comment>
<comment type="interaction">
    <interactant intactId="EBI-11958364">
        <id>Q9BYQ0</id>
    </interactant>
    <interactant intactId="EBI-10178530">
        <id>O76081-6</id>
        <label>RGS20</label>
    </interactant>
    <organismsDiffer>false</organismsDiffer>
    <experiments>3</experiments>
</comment>
<comment type="interaction">
    <interactant intactId="EBI-11958364">
        <id>Q9BYQ0</id>
    </interactant>
    <interactant intactId="EBI-373337">
        <id>O76064</id>
        <label>RNF8</label>
    </interactant>
    <organismsDiffer>false</organismsDiffer>
    <experiments>3</experiments>
</comment>
<comment type="interaction">
    <interactant intactId="EBI-11958364">
        <id>Q9BYQ0</id>
    </interactant>
    <interactant intactId="EBI-12002412">
        <id>Q86YT5</id>
        <label>SLC13A5</label>
    </interactant>
    <organismsDiffer>false</organismsDiffer>
    <experiments>3</experiments>
</comment>
<comment type="interaction">
    <interactant intactId="EBI-11958364">
        <id>Q9BYQ0</id>
    </interactant>
    <interactant intactId="EBI-12179023">
        <id>Q8IY34</id>
        <label>SLC15A3</label>
    </interactant>
    <organismsDiffer>false</organismsDiffer>
    <experiments>3</experiments>
</comment>
<comment type="interaction">
    <interactant intactId="EBI-11958364">
        <id>Q9BYQ0</id>
    </interactant>
    <interactant intactId="EBI-750494">
        <id>P49901</id>
        <label>SMCP</label>
    </interactant>
    <organismsDiffer>false</organismsDiffer>
    <experiments>6</experiments>
</comment>
<comment type="interaction">
    <interactant intactId="EBI-11958364">
        <id>Q9BYQ0</id>
    </interactant>
    <interactant intactId="EBI-711260">
        <id>Q13432</id>
        <label>UNC119</label>
    </interactant>
    <organismsDiffer>false</organismsDiffer>
    <experiments>3</experiments>
</comment>
<comment type="interaction">
    <interactant intactId="EBI-11958364">
        <id>Q9BYQ0</id>
    </interactant>
    <interactant intactId="EBI-10249550">
        <id>Q6EMK4</id>
        <label>VASN</label>
    </interactant>
    <organismsDiffer>false</organismsDiffer>
    <experiments>3</experiments>
</comment>
<comment type="interaction">
    <interactant intactId="EBI-11958364">
        <id>Q9BYQ0</id>
    </interactant>
    <interactant intactId="EBI-11957216">
        <id>A8MV65-2</id>
        <label>VGLL3</label>
    </interactant>
    <organismsDiffer>false</organismsDiffer>
    <experiments>3</experiments>
</comment>
<comment type="interaction">
    <interactant intactId="EBI-11958364">
        <id>Q9BYQ0</id>
    </interactant>
    <interactant intactId="EBI-743787">
        <id>Q9GZM5</id>
        <label>YIPF3</label>
    </interactant>
    <organismsDiffer>false</organismsDiffer>
    <experiments>3</experiments>
</comment>
<comment type="interaction">
    <interactant intactId="EBI-11958364">
        <id>Q9BYQ0</id>
    </interactant>
    <interactant intactId="EBI-765538">
        <id>P25490</id>
        <label>YY1</label>
    </interactant>
    <organismsDiffer>false</organismsDiffer>
    <experiments>5</experiments>
</comment>
<comment type="interaction">
    <interactant intactId="EBI-11958364">
        <id>Q9BYQ0</id>
    </interactant>
    <interactant intactId="EBI-625509">
        <id>Q8N720</id>
        <label>ZNF655</label>
    </interactant>
    <organismsDiffer>false</organismsDiffer>
    <experiments>3</experiments>
</comment>
<comment type="similarity">
    <text evidence="1">Belongs to the KRTAP type 9 family.</text>
</comment>
<keyword id="KW-0416">Keratin</keyword>
<keyword id="KW-1185">Reference proteome</keyword>
<keyword id="KW-0677">Repeat</keyword>
<sequence length="159" mass="16723">MTHCCSPCCQPTCCRTTCWKPTTVTTCSSTPCCQPSCCVSSCCQPCCRPTCCQNTCCQPICVTSCCQPSCCSTPCCQPTCCGQTSCGSSCGQSSSCAPVYCRRTCYHPTTVCLPGCLNQSCGSNCCQPCCRPACCETTCCRTTCFQPTCVSSCCQPSCC</sequence>
<name>KRA98_HUMAN</name>